<name>MLP2_DROME</name>
<proteinExistence type="evidence at protein level"/>
<keyword id="KW-0963">Cytoplasm</keyword>
<keyword id="KW-0217">Developmental protein</keyword>
<keyword id="KW-0221">Differentiation</keyword>
<keyword id="KW-0440">LIM domain</keyword>
<keyword id="KW-0479">Metal-binding</keyword>
<keyword id="KW-0517">Myogenesis</keyword>
<keyword id="KW-0539">Nucleus</keyword>
<keyword id="KW-1185">Reference proteome</keyword>
<keyword id="KW-0677">Repeat</keyword>
<keyword id="KW-0862">Zinc</keyword>
<comment type="function">
    <text evidence="3 4">Plays a role in cell differentiation late in myogenesis. Transcription factor Mef2 is essential for expression.</text>
</comment>
<comment type="subcellular location">
    <subcellularLocation>
        <location evidence="4">Cytoplasm</location>
    </subcellularLocation>
    <subcellularLocation>
        <location evidence="4">Nucleus</location>
    </subcellularLocation>
</comment>
<comment type="tissue specificity">
    <text evidence="3 4">In the embryo, expression is restricted to the somatic, visceral, and pharyngeal muscles. Within the somatic musculature, expression is localized at the ends of muscles fibers at the point of attachment to the epidermis (at protein level). There is no expression in cardiac mesoderm or in fat body.</text>
</comment>
<comment type="developmental stage">
    <text evidence="4">Expression is biphasic, peaking late in embryogenesis (16-24 hours embryos) and during the larval to pupal transition, when the musculature is differentiating. Found in developing muscles of the visceral and somatic mesoderm subsequent to the formation of the muscle precursor cells. Decreased levels are still detectable in adults.</text>
</comment>
<gene>
    <name evidence="5 7" type="primary">Mlp84B</name>
    <name evidence="7" type="synonym">LIM3</name>
    <name evidence="7" type="ORF">CG1019</name>
</gene>
<feature type="chain" id="PRO_0000075852" description="Muscle LIM protein Mlp84B">
    <location>
        <begin position="1"/>
        <end position="495"/>
    </location>
</feature>
<feature type="domain" description="LIM zinc-binding 1" evidence="2">
    <location>
        <begin position="12"/>
        <end position="63"/>
    </location>
</feature>
<feature type="domain" description="LIM zinc-binding 2" evidence="2">
    <location>
        <begin position="120"/>
        <end position="172"/>
    </location>
</feature>
<feature type="domain" description="LIM zinc-binding 3" evidence="2">
    <location>
        <begin position="222"/>
        <end position="274"/>
    </location>
</feature>
<feature type="domain" description="LIM zinc-binding 4" evidence="2">
    <location>
        <begin position="325"/>
        <end position="377"/>
    </location>
</feature>
<feature type="domain" description="LIM zinc-binding 5" evidence="2">
    <location>
        <begin position="421"/>
        <end position="473"/>
    </location>
</feature>
<feature type="short sequence motif" description="Nuclear localization signal" evidence="1">
    <location>
        <begin position="66"/>
        <end position="71"/>
    </location>
</feature>
<feature type="short sequence motif" description="Nuclear localization signal" evidence="1">
    <location>
        <begin position="175"/>
        <end position="180"/>
    </location>
</feature>
<dbReference type="EMBL" id="X91245">
    <property type="protein sequence ID" value="CAA62627.1"/>
    <property type="molecule type" value="mRNA"/>
</dbReference>
<dbReference type="EMBL" id="AF090832">
    <property type="protein sequence ID" value="AAC61591.1"/>
    <property type="molecule type" value="Genomic_DNA"/>
</dbReference>
<dbReference type="EMBL" id="AE014297">
    <property type="protein sequence ID" value="AAF54063.1"/>
    <property type="molecule type" value="Genomic_DNA"/>
</dbReference>
<dbReference type="EMBL" id="AE014297">
    <property type="protein sequence ID" value="AAF54064.1"/>
    <property type="molecule type" value="Genomic_DNA"/>
</dbReference>
<dbReference type="EMBL" id="AE014297">
    <property type="protein sequence ID" value="ALI30537.1"/>
    <property type="molecule type" value="Genomic_DNA"/>
</dbReference>
<dbReference type="EMBL" id="BT003202">
    <property type="protein sequence ID" value="AAO24957.1"/>
    <property type="molecule type" value="mRNA"/>
</dbReference>
<dbReference type="RefSeq" id="NP_001303418.1">
    <property type="nucleotide sequence ID" value="NM_001316489.1"/>
</dbReference>
<dbReference type="RefSeq" id="NP_477122.1">
    <property type="nucleotide sequence ID" value="NM_057774.5"/>
</dbReference>
<dbReference type="RefSeq" id="NP_731134.1">
    <property type="nucleotide sequence ID" value="NM_169173.3"/>
</dbReference>
<dbReference type="BioGRID" id="66046">
    <property type="interactions" value="32"/>
</dbReference>
<dbReference type="DIP" id="DIP-17587N"/>
<dbReference type="FunCoup" id="Q24400">
    <property type="interactions" value="9"/>
</dbReference>
<dbReference type="IntAct" id="Q24400">
    <property type="interactions" value="16"/>
</dbReference>
<dbReference type="STRING" id="7227.FBpp0312428"/>
<dbReference type="PaxDb" id="7227-FBpp0081133"/>
<dbReference type="DNASU" id="40849"/>
<dbReference type="EnsemblMetazoa" id="FBtr0081616">
    <property type="protein sequence ID" value="FBpp0081133"/>
    <property type="gene ID" value="FBgn0014863"/>
</dbReference>
<dbReference type="EnsemblMetazoa" id="FBtr0081617">
    <property type="protein sequence ID" value="FBpp0081134"/>
    <property type="gene ID" value="FBgn0014863"/>
</dbReference>
<dbReference type="EnsemblMetazoa" id="FBtr0346967">
    <property type="protein sequence ID" value="FBpp0312428"/>
    <property type="gene ID" value="FBgn0014863"/>
</dbReference>
<dbReference type="GeneID" id="40849"/>
<dbReference type="KEGG" id="dme:Dmel_CG1019"/>
<dbReference type="UCSC" id="CG1019-RB">
    <property type="organism name" value="d. melanogaster"/>
</dbReference>
<dbReference type="AGR" id="FB:FBgn0014863"/>
<dbReference type="CTD" id="40849"/>
<dbReference type="FlyBase" id="FBgn0014863">
    <property type="gene designation" value="Mlp84B"/>
</dbReference>
<dbReference type="VEuPathDB" id="VectorBase:FBgn0014863"/>
<dbReference type="eggNOG" id="KOG1700">
    <property type="taxonomic scope" value="Eukaryota"/>
</dbReference>
<dbReference type="GeneTree" id="ENSGT00940000171011"/>
<dbReference type="HOGENOM" id="CLU_037060_0_0_1"/>
<dbReference type="InParanoid" id="Q24400"/>
<dbReference type="OMA" id="ESPKCPR"/>
<dbReference type="OrthoDB" id="1679758at2759"/>
<dbReference type="PhylomeDB" id="Q24400"/>
<dbReference type="SignaLink" id="Q24400"/>
<dbReference type="BioGRID-ORCS" id="40849">
    <property type="hits" value="1 hit in 3 CRISPR screens"/>
</dbReference>
<dbReference type="GenomeRNAi" id="40849"/>
<dbReference type="PRO" id="PR:Q24400"/>
<dbReference type="Proteomes" id="UP000000803">
    <property type="component" value="Chromosome 3R"/>
</dbReference>
<dbReference type="Bgee" id="FBgn0014863">
    <property type="expression patterns" value="Expressed in muscle cell in imaginal disc-derived wing and 183 other cell types or tissues"/>
</dbReference>
<dbReference type="GO" id="GO:0005737">
    <property type="term" value="C:cytoplasm"/>
    <property type="evidence" value="ECO:0000318"/>
    <property type="project" value="GO_Central"/>
</dbReference>
<dbReference type="GO" id="GO:0005634">
    <property type="term" value="C:nucleus"/>
    <property type="evidence" value="ECO:0000314"/>
    <property type="project" value="FlyBase"/>
</dbReference>
<dbReference type="GO" id="GO:0030018">
    <property type="term" value="C:Z disc"/>
    <property type="evidence" value="ECO:0000314"/>
    <property type="project" value="FlyBase"/>
</dbReference>
<dbReference type="GO" id="GO:0042805">
    <property type="term" value="F:actinin binding"/>
    <property type="evidence" value="ECO:0000318"/>
    <property type="project" value="GO_Central"/>
</dbReference>
<dbReference type="GO" id="GO:0046872">
    <property type="term" value="F:metal ion binding"/>
    <property type="evidence" value="ECO:0007669"/>
    <property type="project" value="UniProtKB-KW"/>
</dbReference>
<dbReference type="GO" id="GO:0008307">
    <property type="term" value="F:structural constituent of muscle"/>
    <property type="evidence" value="ECO:0000315"/>
    <property type="project" value="FlyBase"/>
</dbReference>
<dbReference type="GO" id="GO:0007517">
    <property type="term" value="P:muscle organ development"/>
    <property type="evidence" value="ECO:0007669"/>
    <property type="project" value="UniProtKB-KW"/>
</dbReference>
<dbReference type="GO" id="GO:0060537">
    <property type="term" value="P:muscle tissue development"/>
    <property type="evidence" value="ECO:0000270"/>
    <property type="project" value="FlyBase"/>
</dbReference>
<dbReference type="GO" id="GO:0045214">
    <property type="term" value="P:sarcomere organization"/>
    <property type="evidence" value="ECO:0000316"/>
    <property type="project" value="FlyBase"/>
</dbReference>
<dbReference type="CDD" id="cd09404">
    <property type="entry name" value="LIM1_MLP84B_like"/>
    <property type="match status" value="1"/>
</dbReference>
<dbReference type="CDD" id="cd09326">
    <property type="entry name" value="LIM_CRP_like"/>
    <property type="match status" value="4"/>
</dbReference>
<dbReference type="FunFam" id="2.10.110.10:FF:000001">
    <property type="entry name" value="Cysteine and glycine-rich protein 1"/>
    <property type="match status" value="5"/>
</dbReference>
<dbReference type="Gene3D" id="2.10.110.10">
    <property type="entry name" value="Cysteine Rich Protein"/>
    <property type="match status" value="5"/>
</dbReference>
<dbReference type="InterPro" id="IPR001781">
    <property type="entry name" value="Znf_LIM"/>
</dbReference>
<dbReference type="PANTHER" id="PTHR24215:SF35">
    <property type="entry name" value="MUSCLE LIM PROTEIN MLP84B"/>
    <property type="match status" value="1"/>
</dbReference>
<dbReference type="PANTHER" id="PTHR24215">
    <property type="entry name" value="RHO-GTPASE-ACTIVATING PROTEIN LRG1"/>
    <property type="match status" value="1"/>
</dbReference>
<dbReference type="Pfam" id="PF00412">
    <property type="entry name" value="LIM"/>
    <property type="match status" value="5"/>
</dbReference>
<dbReference type="SMART" id="SM00132">
    <property type="entry name" value="LIM"/>
    <property type="match status" value="5"/>
</dbReference>
<dbReference type="SUPFAM" id="SSF57716">
    <property type="entry name" value="Glucocorticoid receptor-like (DNA-binding domain)"/>
    <property type="match status" value="10"/>
</dbReference>
<dbReference type="PROSITE" id="PS00478">
    <property type="entry name" value="LIM_DOMAIN_1"/>
    <property type="match status" value="5"/>
</dbReference>
<dbReference type="PROSITE" id="PS50023">
    <property type="entry name" value="LIM_DOMAIN_2"/>
    <property type="match status" value="5"/>
</dbReference>
<evidence type="ECO:0000255" key="1"/>
<evidence type="ECO:0000255" key="2">
    <source>
        <dbReference type="PROSITE-ProRule" id="PRU00125"/>
    </source>
</evidence>
<evidence type="ECO:0000269" key="3">
    <source>
    </source>
</evidence>
<evidence type="ECO:0000269" key="4">
    <source>
    </source>
</evidence>
<evidence type="ECO:0000303" key="5">
    <source>
    </source>
</evidence>
<evidence type="ECO:0000312" key="6">
    <source>
        <dbReference type="EMBL" id="ALI30537.1"/>
    </source>
</evidence>
<evidence type="ECO:0000312" key="7">
    <source>
        <dbReference type="FlyBase" id="FBgn0014863"/>
    </source>
</evidence>
<reference key="1">
    <citation type="journal article" date="1996" name="J. Cell Biol.">
        <title>Two muscle-specific LIM proteins in Drosophila.</title>
        <authorList>
            <person name="Stronach B.E."/>
            <person name="Siegrist S.E."/>
            <person name="Beckerle M.C."/>
        </authorList>
    </citation>
    <scope>NUCLEOTIDE SEQUENCE [MRNA]</scope>
    <scope>FUNCTION</scope>
    <scope>SUBCELLULAR LOCATION</scope>
    <scope>TISSUE SPECIFICITY</scope>
    <scope>DEVELOPMENTAL STAGE</scope>
</reference>
<reference key="2">
    <citation type="journal article" date="1999" name="Mol. Biol. Cell">
        <title>Muscle LIM proteins are associated with muscle sarcomeres and require dMEF2 for their expression during Drosophila myogenesis.</title>
        <authorList>
            <person name="Stronach B.E."/>
            <person name="Renfranz P.J."/>
            <person name="Lilly B."/>
            <person name="Beckerle M.C."/>
        </authorList>
    </citation>
    <scope>NUCLEOTIDE SEQUENCE [GENOMIC DNA]</scope>
    <scope>FUNCTION</scope>
    <scope>TISSUE SPECIFICITY</scope>
</reference>
<reference key="3">
    <citation type="journal article" date="2000" name="Science">
        <title>The genome sequence of Drosophila melanogaster.</title>
        <authorList>
            <person name="Adams M.D."/>
            <person name="Celniker S.E."/>
            <person name="Holt R.A."/>
            <person name="Evans C.A."/>
            <person name="Gocayne J.D."/>
            <person name="Amanatides P.G."/>
            <person name="Scherer S.E."/>
            <person name="Li P.W."/>
            <person name="Hoskins R.A."/>
            <person name="Galle R.F."/>
            <person name="George R.A."/>
            <person name="Lewis S.E."/>
            <person name="Richards S."/>
            <person name="Ashburner M."/>
            <person name="Henderson S.N."/>
            <person name="Sutton G.G."/>
            <person name="Wortman J.R."/>
            <person name="Yandell M.D."/>
            <person name="Zhang Q."/>
            <person name="Chen L.X."/>
            <person name="Brandon R.C."/>
            <person name="Rogers Y.-H.C."/>
            <person name="Blazej R.G."/>
            <person name="Champe M."/>
            <person name="Pfeiffer B.D."/>
            <person name="Wan K.H."/>
            <person name="Doyle C."/>
            <person name="Baxter E.G."/>
            <person name="Helt G."/>
            <person name="Nelson C.R."/>
            <person name="Miklos G.L.G."/>
            <person name="Abril J.F."/>
            <person name="Agbayani A."/>
            <person name="An H.-J."/>
            <person name="Andrews-Pfannkoch C."/>
            <person name="Baldwin D."/>
            <person name="Ballew R.M."/>
            <person name="Basu A."/>
            <person name="Baxendale J."/>
            <person name="Bayraktaroglu L."/>
            <person name="Beasley E.M."/>
            <person name="Beeson K.Y."/>
            <person name="Benos P.V."/>
            <person name="Berman B.P."/>
            <person name="Bhandari D."/>
            <person name="Bolshakov S."/>
            <person name="Borkova D."/>
            <person name="Botchan M.R."/>
            <person name="Bouck J."/>
            <person name="Brokstein P."/>
            <person name="Brottier P."/>
            <person name="Burtis K.C."/>
            <person name="Busam D.A."/>
            <person name="Butler H."/>
            <person name="Cadieu E."/>
            <person name="Center A."/>
            <person name="Chandra I."/>
            <person name="Cherry J.M."/>
            <person name="Cawley S."/>
            <person name="Dahlke C."/>
            <person name="Davenport L.B."/>
            <person name="Davies P."/>
            <person name="de Pablos B."/>
            <person name="Delcher A."/>
            <person name="Deng Z."/>
            <person name="Mays A.D."/>
            <person name="Dew I."/>
            <person name="Dietz S.M."/>
            <person name="Dodson K."/>
            <person name="Doup L.E."/>
            <person name="Downes M."/>
            <person name="Dugan-Rocha S."/>
            <person name="Dunkov B.C."/>
            <person name="Dunn P."/>
            <person name="Durbin K.J."/>
            <person name="Evangelista C.C."/>
            <person name="Ferraz C."/>
            <person name="Ferriera S."/>
            <person name="Fleischmann W."/>
            <person name="Fosler C."/>
            <person name="Gabrielian A.E."/>
            <person name="Garg N.S."/>
            <person name="Gelbart W.M."/>
            <person name="Glasser K."/>
            <person name="Glodek A."/>
            <person name="Gong F."/>
            <person name="Gorrell J.H."/>
            <person name="Gu Z."/>
            <person name="Guan P."/>
            <person name="Harris M."/>
            <person name="Harris N.L."/>
            <person name="Harvey D.A."/>
            <person name="Heiman T.J."/>
            <person name="Hernandez J.R."/>
            <person name="Houck J."/>
            <person name="Hostin D."/>
            <person name="Houston K.A."/>
            <person name="Howland T.J."/>
            <person name="Wei M.-H."/>
            <person name="Ibegwam C."/>
            <person name="Jalali M."/>
            <person name="Kalush F."/>
            <person name="Karpen G.H."/>
            <person name="Ke Z."/>
            <person name="Kennison J.A."/>
            <person name="Ketchum K.A."/>
            <person name="Kimmel B.E."/>
            <person name="Kodira C.D."/>
            <person name="Kraft C.L."/>
            <person name="Kravitz S."/>
            <person name="Kulp D."/>
            <person name="Lai Z."/>
            <person name="Lasko P."/>
            <person name="Lei Y."/>
            <person name="Levitsky A.A."/>
            <person name="Li J.H."/>
            <person name="Li Z."/>
            <person name="Liang Y."/>
            <person name="Lin X."/>
            <person name="Liu X."/>
            <person name="Mattei B."/>
            <person name="McIntosh T.C."/>
            <person name="McLeod M.P."/>
            <person name="McPherson D."/>
            <person name="Merkulov G."/>
            <person name="Milshina N.V."/>
            <person name="Mobarry C."/>
            <person name="Morris J."/>
            <person name="Moshrefi A."/>
            <person name="Mount S.M."/>
            <person name="Moy M."/>
            <person name="Murphy B."/>
            <person name="Murphy L."/>
            <person name="Muzny D.M."/>
            <person name="Nelson D.L."/>
            <person name="Nelson D.R."/>
            <person name="Nelson K.A."/>
            <person name="Nixon K."/>
            <person name="Nusskern D.R."/>
            <person name="Pacleb J.M."/>
            <person name="Palazzolo M."/>
            <person name="Pittman G.S."/>
            <person name="Pan S."/>
            <person name="Pollard J."/>
            <person name="Puri V."/>
            <person name="Reese M.G."/>
            <person name="Reinert K."/>
            <person name="Remington K."/>
            <person name="Saunders R.D.C."/>
            <person name="Scheeler F."/>
            <person name="Shen H."/>
            <person name="Shue B.C."/>
            <person name="Siden-Kiamos I."/>
            <person name="Simpson M."/>
            <person name="Skupski M.P."/>
            <person name="Smith T.J."/>
            <person name="Spier E."/>
            <person name="Spradling A.C."/>
            <person name="Stapleton M."/>
            <person name="Strong R."/>
            <person name="Sun E."/>
            <person name="Svirskas R."/>
            <person name="Tector C."/>
            <person name="Turner R."/>
            <person name="Venter E."/>
            <person name="Wang A.H."/>
            <person name="Wang X."/>
            <person name="Wang Z.-Y."/>
            <person name="Wassarman D.A."/>
            <person name="Weinstock G.M."/>
            <person name="Weissenbach J."/>
            <person name="Williams S.M."/>
            <person name="Woodage T."/>
            <person name="Worley K.C."/>
            <person name="Wu D."/>
            <person name="Yang S."/>
            <person name="Yao Q.A."/>
            <person name="Ye J."/>
            <person name="Yeh R.-F."/>
            <person name="Zaveri J.S."/>
            <person name="Zhan M."/>
            <person name="Zhang G."/>
            <person name="Zhao Q."/>
            <person name="Zheng L."/>
            <person name="Zheng X.H."/>
            <person name="Zhong F.N."/>
            <person name="Zhong W."/>
            <person name="Zhou X."/>
            <person name="Zhu S.C."/>
            <person name="Zhu X."/>
            <person name="Smith H.O."/>
            <person name="Gibbs R.A."/>
            <person name="Myers E.W."/>
            <person name="Rubin G.M."/>
            <person name="Venter J.C."/>
        </authorList>
    </citation>
    <scope>NUCLEOTIDE SEQUENCE [LARGE SCALE GENOMIC DNA]</scope>
    <source>
        <strain>Berkeley</strain>
    </source>
</reference>
<reference key="4">
    <citation type="journal article" date="2002" name="Genome Biol.">
        <title>Annotation of the Drosophila melanogaster euchromatic genome: a systematic review.</title>
        <authorList>
            <person name="Misra S."/>
            <person name="Crosby M.A."/>
            <person name="Mungall C.J."/>
            <person name="Matthews B.B."/>
            <person name="Campbell K.S."/>
            <person name="Hradecky P."/>
            <person name="Huang Y."/>
            <person name="Kaminker J.S."/>
            <person name="Millburn G.H."/>
            <person name="Prochnik S.E."/>
            <person name="Smith C.D."/>
            <person name="Tupy J.L."/>
            <person name="Whitfield E.J."/>
            <person name="Bayraktaroglu L."/>
            <person name="Berman B.P."/>
            <person name="Bettencourt B.R."/>
            <person name="Celniker S.E."/>
            <person name="de Grey A.D.N.J."/>
            <person name="Drysdale R.A."/>
            <person name="Harris N.L."/>
            <person name="Richter J."/>
            <person name="Russo S."/>
            <person name="Schroeder A.J."/>
            <person name="Shu S.Q."/>
            <person name="Stapleton M."/>
            <person name="Yamada C."/>
            <person name="Ashburner M."/>
            <person name="Gelbart W.M."/>
            <person name="Rubin G.M."/>
            <person name="Lewis S.E."/>
        </authorList>
    </citation>
    <scope>GENOME REANNOTATION</scope>
    <source>
        <strain>Berkeley</strain>
    </source>
</reference>
<reference key="5">
    <citation type="submission" date="2003-01" db="EMBL/GenBank/DDBJ databases">
        <authorList>
            <person name="Stapleton M."/>
            <person name="Brokstein P."/>
            <person name="Hong L."/>
            <person name="Agbayani A."/>
            <person name="Carlson J.W."/>
            <person name="Champe M."/>
            <person name="Chavez C."/>
            <person name="Dorsett V."/>
            <person name="Dresnek D."/>
            <person name="Farfan D."/>
            <person name="Frise E."/>
            <person name="George R.A."/>
            <person name="Gonzalez M."/>
            <person name="Guarin H."/>
            <person name="Kronmiller B."/>
            <person name="Li P.W."/>
            <person name="Liao G."/>
            <person name="Miranda A."/>
            <person name="Mungall C.J."/>
            <person name="Nunoo J."/>
            <person name="Pacleb J.M."/>
            <person name="Paragas V."/>
            <person name="Park S."/>
            <person name="Patel S."/>
            <person name="Phouanenavong S."/>
            <person name="Wan K.H."/>
            <person name="Yu C."/>
            <person name="Lewis S.E."/>
            <person name="Rubin G.M."/>
            <person name="Celniker S.E."/>
        </authorList>
    </citation>
    <scope>NUCLEOTIDE SEQUENCE [LARGE SCALE MRNA]</scope>
    <source>
        <strain>Berkeley</strain>
        <tissue>Embryo</tissue>
    </source>
</reference>
<reference evidence="6" key="6">
    <citation type="submission" date="2006-08" db="EMBL/GenBank/DDBJ databases">
        <authorList>
            <person name="Qian G."/>
            <person name="Yu M."/>
        </authorList>
    </citation>
    <scope>NUCLEOTIDE SEQUENCE [LARGE SCALE GENOMIC DNA]</scope>
</reference>
<sequence>MPSFQPIEAPKCPRCGKSVYAAEERLAGGYVFHKNCFKCGMCNKSLDSTNCTEHERELYCKTCHGRKFGPKGYGFGTGAGTLSMDNGSQFLRENGDVPSVRNGARLEPRAIARAPEGEGCPRCGGYVYAAEQMLARGRSWHKECFKCGTCKKGLDSILCCEAPDKNIYCKGCYAKKFGPKGYGYGQGGGALQSDCYAHDDGAPQIRAAIDVDKIQARPGEGCPRCGGVVYAAEQKLSKGREWHKKCFNCKDCHKTLDSINASDGPDRDVYCRTCYGKKWGPHGYGFACGSGFLQTDGLTEDQISANRPFYNPDTTSIKARDGEGCPRCGGAVFAAEQQLSKGKVWHKKCYNCADCHRPLDSVLACDGPDGDIHCRACYGKLFGPKGFGYGHAPTLVSTSGESTIQFPDGRPLAGPKTSGGCPRCGFAVFAAEQMISKTRIWHKRCFYCSDCRKSLDSTNLNDGPDGDIYCRACYGRNFGPKGVGYGLGAGALTTF</sequence>
<organism>
    <name type="scientific">Drosophila melanogaster</name>
    <name type="common">Fruit fly</name>
    <dbReference type="NCBI Taxonomy" id="7227"/>
    <lineage>
        <taxon>Eukaryota</taxon>
        <taxon>Metazoa</taxon>
        <taxon>Ecdysozoa</taxon>
        <taxon>Arthropoda</taxon>
        <taxon>Hexapoda</taxon>
        <taxon>Insecta</taxon>
        <taxon>Pterygota</taxon>
        <taxon>Neoptera</taxon>
        <taxon>Endopterygota</taxon>
        <taxon>Diptera</taxon>
        <taxon>Brachycera</taxon>
        <taxon>Muscomorpha</taxon>
        <taxon>Ephydroidea</taxon>
        <taxon>Drosophilidae</taxon>
        <taxon>Drosophila</taxon>
        <taxon>Sophophora</taxon>
    </lineage>
</organism>
<accession>Q24400</accession>
<accession>A4V2J1</accession>
<accession>Q9VI62</accession>
<protein>
    <recommendedName>
        <fullName evidence="5">Muscle LIM protein Mlp84B</fullName>
    </recommendedName>
</protein>